<protein>
    <recommendedName>
        <fullName evidence="4">Morintide mO2</fullName>
    </recommendedName>
    <alternativeName>
        <fullName evidence="6">8C-hevein-like protein</fullName>
    </alternativeName>
</protein>
<feature type="signal peptide" evidence="3">
    <location>
        <begin position="1"/>
        <end position="20"/>
    </location>
</feature>
<feature type="peptide" id="PRO_0000449244" description="Morintide mO2" evidence="3">
    <location>
        <begin position="21"/>
        <end position="63"/>
    </location>
</feature>
<feature type="propeptide" id="PRO_0000449245" evidence="3">
    <location>
        <begin position="64"/>
        <end position="79"/>
    </location>
</feature>
<feature type="domain" description="Chitin-binding type-1" evidence="2">
    <location>
        <begin position="21"/>
        <end position="63"/>
    </location>
</feature>
<feature type="disulfide bond" evidence="2">
    <location>
        <begin position="23"/>
        <end position="38"/>
    </location>
</feature>
<feature type="disulfide bond" evidence="2">
    <location>
        <begin position="32"/>
        <end position="44"/>
    </location>
</feature>
<feature type="disulfide bond" evidence="2">
    <location>
        <begin position="37"/>
        <end position="51"/>
    </location>
</feature>
<feature type="disulfide bond" evidence="2">
    <location>
        <begin position="57"/>
        <end position="61"/>
    </location>
</feature>
<comment type="function">
    <text evidence="1">Chitin-binding protein which functions in defense against chitin-containing fungal pathogens.</text>
</comment>
<comment type="tissue specificity">
    <text evidence="3">Leaves (at protein level).</text>
</comment>
<comment type="mass spectrometry"/>
<accession>A0A1S6EK92</accession>
<sequence>MAKLSFLSLFLLCLVATATAQNCGRQAGNRACANGLCCSQYGFCGSTSEYCSRANGCQSNCRGGGGAGGAGGGAGGGSP</sequence>
<organism evidence="4">
    <name type="scientific">Moringa oleifera</name>
    <name type="common">Horseradish tree</name>
    <name type="synonym">Moringa pterygosperma</name>
    <dbReference type="NCBI Taxonomy" id="3735"/>
    <lineage>
        <taxon>Eukaryota</taxon>
        <taxon>Viridiplantae</taxon>
        <taxon>Streptophyta</taxon>
        <taxon>Embryophyta</taxon>
        <taxon>Tracheophyta</taxon>
        <taxon>Spermatophyta</taxon>
        <taxon>Magnoliopsida</taxon>
        <taxon>eudicotyledons</taxon>
        <taxon>Gunneridae</taxon>
        <taxon>Pentapetalae</taxon>
        <taxon>rosids</taxon>
        <taxon>malvids</taxon>
        <taxon>Brassicales</taxon>
        <taxon>Moringaceae</taxon>
        <taxon>Moringa</taxon>
    </lineage>
</organism>
<dbReference type="EMBL" id="KY436356">
    <property type="protein sequence ID" value="AQR58372.1"/>
    <property type="molecule type" value="mRNA"/>
</dbReference>
<dbReference type="SMR" id="A0A1S6EK92"/>
<dbReference type="GO" id="GO:0008061">
    <property type="term" value="F:chitin binding"/>
    <property type="evidence" value="ECO:0007669"/>
    <property type="project" value="UniProtKB-KW"/>
</dbReference>
<dbReference type="GO" id="GO:0050832">
    <property type="term" value="P:defense response to fungus"/>
    <property type="evidence" value="ECO:0007669"/>
    <property type="project" value="UniProtKB-KW"/>
</dbReference>
<dbReference type="GO" id="GO:0031640">
    <property type="term" value="P:killing of cells of another organism"/>
    <property type="evidence" value="ECO:0007669"/>
    <property type="project" value="UniProtKB-KW"/>
</dbReference>
<dbReference type="CDD" id="cd00035">
    <property type="entry name" value="ChtBD1"/>
    <property type="match status" value="1"/>
</dbReference>
<dbReference type="FunFam" id="3.30.60.10:FF:000001">
    <property type="entry name" value="Basic endochitinase"/>
    <property type="match status" value="1"/>
</dbReference>
<dbReference type="Gene3D" id="3.30.60.10">
    <property type="entry name" value="Endochitinase-like"/>
    <property type="match status" value="1"/>
</dbReference>
<dbReference type="InterPro" id="IPR001002">
    <property type="entry name" value="Chitin-bd_1"/>
</dbReference>
<dbReference type="InterPro" id="IPR018371">
    <property type="entry name" value="Chitin-binding_1_CS"/>
</dbReference>
<dbReference type="InterPro" id="IPR036861">
    <property type="entry name" value="Endochitinase-like_sf"/>
</dbReference>
<dbReference type="Pfam" id="PF00187">
    <property type="entry name" value="Chitin_bind_1"/>
    <property type="match status" value="1"/>
</dbReference>
<dbReference type="PRINTS" id="PR00451">
    <property type="entry name" value="CHITINBINDNG"/>
</dbReference>
<dbReference type="SMART" id="SM00270">
    <property type="entry name" value="ChtBD1"/>
    <property type="match status" value="1"/>
</dbReference>
<dbReference type="SUPFAM" id="SSF57016">
    <property type="entry name" value="Plant lectins/antimicrobial peptides"/>
    <property type="match status" value="1"/>
</dbReference>
<dbReference type="PROSITE" id="PS00026">
    <property type="entry name" value="CHIT_BIND_I_1"/>
    <property type="match status" value="1"/>
</dbReference>
<dbReference type="PROSITE" id="PS50941">
    <property type="entry name" value="CHIT_BIND_I_2"/>
    <property type="match status" value="1"/>
</dbReference>
<name>MO2_MOROL</name>
<keyword id="KW-0929">Antimicrobial</keyword>
<keyword id="KW-0147">Chitin-binding</keyword>
<keyword id="KW-0903">Direct protein sequencing</keyword>
<keyword id="KW-1015">Disulfide bond</keyword>
<keyword id="KW-0295">Fungicide</keyword>
<keyword id="KW-0732">Signal</keyword>
<evidence type="ECO:0000250" key="1">
    <source>
        <dbReference type="UniProtKB" id="A0A1S6EK91"/>
    </source>
</evidence>
<evidence type="ECO:0000255" key="2">
    <source>
        <dbReference type="PROSITE-ProRule" id="PRU00261"/>
    </source>
</evidence>
<evidence type="ECO:0000269" key="3">
    <source>
    </source>
</evidence>
<evidence type="ECO:0000303" key="4">
    <source>
    </source>
</evidence>
<evidence type="ECO:0000305" key="5"/>
<evidence type="ECO:0000312" key="6">
    <source>
        <dbReference type="EMBL" id="AQR58372.1"/>
    </source>
</evidence>
<proteinExistence type="evidence at protein level"/>
<reference evidence="5" key="1">
    <citation type="journal article" date="2017" name="BMC Plant Biol.">
        <title>Morintides: cargo-free chitin-binding peptides from Moringa oleifera.</title>
        <authorList>
            <person name="Kini S.G."/>
            <person name="Wong K.H."/>
            <person name="Tan W.L."/>
            <person name="Xiao T."/>
            <person name="Tam J.P."/>
        </authorList>
    </citation>
    <scope>NUCLEOTIDE SEQUENCE [MRNA]</scope>
    <scope>PROTEIN SEQUENCE OF 21-63</scope>
    <scope>MASS SPECTROMETRY</scope>
    <scope>TISSUE SPECIFICITY</scope>
    <source>
        <tissue evidence="4">Leaf</tissue>
    </source>
</reference>